<accession>Q8JU60</accession>
<proteinExistence type="inferred from homology"/>
<gene>
    <name type="primary">S3</name>
</gene>
<evidence type="ECO:0000250" key="1">
    <source>
        <dbReference type="UniProtKB" id="B2BNE1"/>
    </source>
</evidence>
<evidence type="ECO:0000250" key="2">
    <source>
        <dbReference type="UniProtKB" id="P15024"/>
    </source>
</evidence>
<evidence type="ECO:0000255" key="3">
    <source>
        <dbReference type="PROSITE-ProRule" id="PRU00042"/>
    </source>
</evidence>
<evidence type="ECO:0000256" key="4">
    <source>
        <dbReference type="SAM" id="MobiDB-lite"/>
    </source>
</evidence>
<evidence type="ECO:0000305" key="5"/>
<sequence>MPRRSARKAQSATASPADTNVVPAKDAPTTNSPPSTTSPNQAAADANQQQAGIVSSQSGPNAVGDSAPSTSVNNDGDIITRPTSDSIAAVANATKPAAVVSDPQSMKVTPIVNPSSYVCNVCNARFSTMSALSEHLRSDHRDDASTLLATPMINNAIRSFLTAWDGIRILSPDVSSKHLSAYLDSAVANGPELIVEDTGLCTSFMLLDNIPSAHLTKELIGFTWFMQMYQMTPPLPEGAVNRIVCMTNWASLGDEGRGLEVRLPPPTDSSVHAYKTVLSRGYIDNAQFNPLALRSNVLLMLLQFTLSNLKINKSSTFTSDVTTITSGRMIRAFEGRPELLALAYPGRAVLPTQTKNAQFLSTAIADRIGRLDRANLIGGEVSAMVECMELCDALTLHIRETYVMLLRSMHQDPTQIVQIVNECANNLLNSTIPISLRPTILCPWFASSEDLRLQQVMHLVNISSNTAAALPLVEALSTLLRSVTPLVLDPTVLTNAITTISESTTQTISPISEILRLLQPMGNDYAAFWKCIASWAYNGLVTTVLSEDAFPDSSQSITHLPSMWKCLFLTLAGPMTSDPHSPVKVFMALANLLAQPEPIAIGVPGMHQTTPASQFSHPGVWPPGFLNPQLINPQQAPLLRAFAEHIRANWPQPSEFGYGSTLQGSANLFIPPNRMVYPWPNQPLPRLTVAPTYDSAMSNWISTTIAFFIRVVNSVNMTATVNDLTRRTMTGVMTAMRQVKTMTPFYIQHMCPTELSVLASVTVTPPFQVPFTRLVQNDVITNVLVARVDPAQRGDAAVDIRATHATFAAALPVDPAAIVVAMLCGQTETNLIPSHHYGKAFAPLFASNAMFTRNQRAVITREAFVCARSAVAQCQDAGFLVPRPLDALRQFDVTSAAAAEIMHAVNDAFKTAFDLDGALLDGLALYGDPRIADLSAAYLQYGGNVVREHVPPGPSHIHRTLQQVESTFMAEMNLFNVARGNLYLVQTATNGNWSPMAPVAAPPFVRGGPNVRVVGRFGTIVPRPDGLEPQLIDDGNVPRDIAGDWVYPSDVLQVSVAVFCDYVWPMVKAGRTRVLVELGHYVYTLHYYDPQISLDEAPILEEWLSKINPAGIPPVPFCIPIPQVYPCITARRVHYAFTSENNNDSLFSTNAASIDTAFGENAAVSPLRWPGLVDPNYRVGTNDLPNRITLYNSLYRYNFTYPTLDGIMYVRSAT</sequence>
<organismHost>
    <name type="scientific">Notemigonus crysoleucas</name>
    <name type="common">Golden shiner</name>
    <name type="synonym">Cyprinus crysoleucas</name>
    <dbReference type="NCBI Taxonomy" id="28800"/>
</organismHost>
<organismHost>
    <name type="scientific">Pimephales promelas</name>
    <name type="common">Fathead minnow</name>
    <dbReference type="NCBI Taxonomy" id="90988"/>
</organismHost>
<name>CAPSD_AQRVC</name>
<dbReference type="EMBL" id="AF403400">
    <property type="protein sequence ID" value="AAM92746.1"/>
    <property type="molecule type" value="Genomic_RNA"/>
</dbReference>
<dbReference type="RefSeq" id="NP_938062.1">
    <property type="nucleotide sequence ID" value="NC_005168.1"/>
</dbReference>
<dbReference type="EMDB" id="EMD-29243"/>
<dbReference type="EMDB" id="EMD-29244"/>
<dbReference type="SMR" id="Q8JU60"/>
<dbReference type="KEGG" id="vg:2648331"/>
<dbReference type="Proteomes" id="UP000006713">
    <property type="component" value="Genome"/>
</dbReference>
<dbReference type="GO" id="GO:0039616">
    <property type="term" value="C:T=2 icosahedral viral capsid"/>
    <property type="evidence" value="ECO:0007669"/>
    <property type="project" value="UniProtKB-KW"/>
</dbReference>
<dbReference type="GO" id="GO:0039625">
    <property type="term" value="C:viral inner capsid"/>
    <property type="evidence" value="ECO:0007669"/>
    <property type="project" value="UniProtKB-KW"/>
</dbReference>
<dbReference type="GO" id="GO:0005524">
    <property type="term" value="F:ATP binding"/>
    <property type="evidence" value="ECO:0007669"/>
    <property type="project" value="UniProtKB-KW"/>
</dbReference>
<dbReference type="GO" id="GO:0016787">
    <property type="term" value="F:hydrolase activity"/>
    <property type="evidence" value="ECO:0007669"/>
    <property type="project" value="UniProtKB-KW"/>
</dbReference>
<dbReference type="GO" id="GO:0003724">
    <property type="term" value="F:RNA helicase activity"/>
    <property type="evidence" value="ECO:0007669"/>
    <property type="project" value="UniProtKB-EC"/>
</dbReference>
<dbReference type="GO" id="GO:0008270">
    <property type="term" value="F:zinc ion binding"/>
    <property type="evidence" value="ECO:0007669"/>
    <property type="project" value="UniProtKB-KW"/>
</dbReference>
<dbReference type="GO" id="GO:0006370">
    <property type="term" value="P:7-methylguanosine mRNA capping"/>
    <property type="evidence" value="ECO:0007669"/>
    <property type="project" value="UniProtKB-KW"/>
</dbReference>
<dbReference type="CDD" id="cd11674">
    <property type="entry name" value="lambda-1"/>
    <property type="match status" value="1"/>
</dbReference>
<dbReference type="Gene3D" id="3.90.1830.10">
    <property type="entry name" value="Inner capsid protein lambda-1"/>
    <property type="match status" value="1"/>
</dbReference>
<dbReference type="InterPro" id="IPR054176">
    <property type="entry name" value="Lamba1_VP3"/>
</dbReference>
<dbReference type="InterPro" id="IPR044949">
    <property type="entry name" value="Lambda-1/VP3_sf"/>
</dbReference>
<dbReference type="InterPro" id="IPR013087">
    <property type="entry name" value="Znf_C2H2_type"/>
</dbReference>
<dbReference type="Pfam" id="PF22033">
    <property type="entry name" value="Lamba1_VP3"/>
    <property type="match status" value="1"/>
</dbReference>
<dbReference type="Pfam" id="PF13912">
    <property type="entry name" value="zf-C2H2_6"/>
    <property type="match status" value="1"/>
</dbReference>
<dbReference type="SMART" id="SM00355">
    <property type="entry name" value="ZnF_C2H2"/>
    <property type="match status" value="1"/>
</dbReference>
<dbReference type="PROSITE" id="PS00028">
    <property type="entry name" value="ZINC_FINGER_C2H2_1"/>
    <property type="match status" value="1"/>
</dbReference>
<dbReference type="PROSITE" id="PS50157">
    <property type="entry name" value="ZINC_FINGER_C2H2_2"/>
    <property type="match status" value="1"/>
</dbReference>
<keyword id="KW-0067">ATP-binding</keyword>
<keyword id="KW-0167">Capsid protein</keyword>
<keyword id="KW-0347">Helicase</keyword>
<keyword id="KW-0378">Hydrolase</keyword>
<keyword id="KW-1153">Inner capsid protein</keyword>
<keyword id="KW-0479">Metal-binding</keyword>
<keyword id="KW-0506">mRNA capping</keyword>
<keyword id="KW-0507">mRNA processing</keyword>
<keyword id="KW-0547">Nucleotide-binding</keyword>
<keyword id="KW-1185">Reference proteome</keyword>
<keyword id="KW-1141">T=2 icosahedral capsid protein</keyword>
<keyword id="KW-0946">Virion</keyword>
<keyword id="KW-0862">Zinc</keyword>
<keyword id="KW-0863">Zinc-finger</keyword>
<protein>
    <recommendedName>
        <fullName>Inner capsid protein VP3</fullName>
    </recommendedName>
    <alternativeName>
        <fullName>ATP-dependent DNA helicase VP3</fullName>
    </alternativeName>
</protein>
<comment type="function">
    <text evidence="2">Inner capsid protein that self-assembles to form an icosahedral capsid with a T=2 symmetry, which consists of 120 copies of VP2, with channels at each of its five-fold vertices. This capsid constitutes the innermost concentric layer of the viral mature particle.</text>
</comment>
<comment type="subunit">
    <text evidence="1">Homodecamer; each decamer is made up of two conformers of VP2, called VP2A and VP2B. 12 homodecamers assemble to form an icosahedral capsid. Interacts with VP6.</text>
</comment>
<comment type="subcellular location">
    <subcellularLocation>
        <location evidence="2">Virion</location>
    </subcellularLocation>
    <text evidence="2">Found in the inner capsid (120 copies).</text>
</comment>
<comment type="similarity">
    <text evidence="5">Belongs to the turreted BTV-fold inner capsid family.</text>
</comment>
<reference key="1">
    <citation type="journal article" date="2002" name="J. Gen. Virol.">
        <title>Common evolutionary origin of aquareoviruses and orthoreoviruses revealed by genome characterization of Golden shiner reovirus, Grass carp reovirus, Striped bass reovirus and golden ide reovirus (genus Aquareovirus, family Reoviridae).</title>
        <authorList>
            <person name="Attoui H."/>
            <person name="Fang Q."/>
            <person name="Mohd Jaafar F."/>
            <person name="Cantaloube J.F."/>
            <person name="Biagini P."/>
            <person name="de Micco P."/>
            <person name="de Lamballerie X."/>
        </authorList>
    </citation>
    <scope>NUCLEOTIDE SEQUENCE [GENOMIC RNA]</scope>
</reference>
<organism>
    <name type="scientific">Aquareovirus C (isolate Golden shiner/USA/GSRV/1977)</name>
    <name type="common">AQRV-C</name>
    <dbReference type="NCBI Taxonomy" id="185783"/>
    <lineage>
        <taxon>Viruses</taxon>
        <taxon>Riboviria</taxon>
        <taxon>Orthornavirae</taxon>
        <taxon>Duplornaviricota</taxon>
        <taxon>Resentoviricetes</taxon>
        <taxon>Reovirales</taxon>
        <taxon>Spinareoviridae</taxon>
        <taxon>Aquareovirus</taxon>
        <taxon>Aquareovirus ctenopharyngodontis</taxon>
    </lineage>
</organism>
<feature type="chain" id="PRO_0000404169" description="Inner capsid protein VP3">
    <location>
        <begin position="1"/>
        <end position="1214"/>
    </location>
</feature>
<feature type="zinc finger region" description="C2H2-type" evidence="3">
    <location>
        <begin position="117"/>
        <end position="140"/>
    </location>
</feature>
<feature type="region of interest" description="Disordered" evidence="4">
    <location>
        <begin position="1"/>
        <end position="80"/>
    </location>
</feature>
<feature type="compositionally biased region" description="Polar residues" evidence="4">
    <location>
        <begin position="8"/>
        <end position="18"/>
    </location>
</feature>
<feature type="compositionally biased region" description="Low complexity" evidence="4">
    <location>
        <begin position="28"/>
        <end position="51"/>
    </location>
</feature>